<protein>
    <recommendedName>
        <fullName evidence="1">Putative 3-methyladenine DNA glycosylase</fullName>
        <ecNumber evidence="1">3.2.2.-</ecNumber>
    </recommendedName>
</protein>
<accession>B2TCB2</accession>
<evidence type="ECO:0000255" key="1">
    <source>
        <dbReference type="HAMAP-Rule" id="MF_00527"/>
    </source>
</evidence>
<name>3MGH_PARPJ</name>
<reference key="1">
    <citation type="journal article" date="2011" name="J. Bacteriol.">
        <title>Complete genome sequence of the plant growth-promoting endophyte Burkholderia phytofirmans strain PsJN.</title>
        <authorList>
            <person name="Weilharter A."/>
            <person name="Mitter B."/>
            <person name="Shin M.V."/>
            <person name="Chain P.S."/>
            <person name="Nowak J."/>
            <person name="Sessitsch A."/>
        </authorList>
    </citation>
    <scope>NUCLEOTIDE SEQUENCE [LARGE SCALE GENOMIC DNA]</scope>
    <source>
        <strain>DSM 17436 / LMG 22146 / PsJN</strain>
    </source>
</reference>
<keyword id="KW-0227">DNA damage</keyword>
<keyword id="KW-0234">DNA repair</keyword>
<keyword id="KW-0378">Hydrolase</keyword>
<gene>
    <name type="ordered locus">Bphyt_4972</name>
</gene>
<comment type="similarity">
    <text evidence="1">Belongs to the DNA glycosylase MPG family.</text>
</comment>
<sequence length="213" mass="23320">MRKHQLPILPLLRDDLPLDTVELARFMIGKYLVHDLPEGRMSGRIVETEAYPLGDSTSHAFMGRRPHNGSMFLAPGHAYVRLTYGLSYMLNMSAEAEEVGAGILLRAIEPLEGLPLIEARRPGVPLRDLARGPGRLTMAFGVGPSFDGWDLCSGQGLWIGVIERGEVPVGVTTRIGLSREMHQPLRFFEPGSAFVSGPRKLLVTPQSGAPKRA</sequence>
<organism>
    <name type="scientific">Paraburkholderia phytofirmans (strain DSM 17436 / LMG 22146 / PsJN)</name>
    <name type="common">Burkholderia phytofirmans</name>
    <dbReference type="NCBI Taxonomy" id="398527"/>
    <lineage>
        <taxon>Bacteria</taxon>
        <taxon>Pseudomonadati</taxon>
        <taxon>Pseudomonadota</taxon>
        <taxon>Betaproteobacteria</taxon>
        <taxon>Burkholderiales</taxon>
        <taxon>Burkholderiaceae</taxon>
        <taxon>Paraburkholderia</taxon>
    </lineage>
</organism>
<dbReference type="EC" id="3.2.2.-" evidence="1"/>
<dbReference type="EMBL" id="CP001053">
    <property type="protein sequence ID" value="ACD19336.1"/>
    <property type="molecule type" value="Genomic_DNA"/>
</dbReference>
<dbReference type="RefSeq" id="WP_012426847.1">
    <property type="nucleotide sequence ID" value="NC_010676.1"/>
</dbReference>
<dbReference type="SMR" id="B2TCB2"/>
<dbReference type="STRING" id="398527.Bphyt_4972"/>
<dbReference type="KEGG" id="bpy:Bphyt_4972"/>
<dbReference type="eggNOG" id="COG2094">
    <property type="taxonomic scope" value="Bacteria"/>
</dbReference>
<dbReference type="HOGENOM" id="CLU_060471_3_2_4"/>
<dbReference type="OrthoDB" id="9794313at2"/>
<dbReference type="Proteomes" id="UP000001739">
    <property type="component" value="Chromosome 2"/>
</dbReference>
<dbReference type="GO" id="GO:0003905">
    <property type="term" value="F:alkylbase DNA N-glycosylase activity"/>
    <property type="evidence" value="ECO:0007669"/>
    <property type="project" value="InterPro"/>
</dbReference>
<dbReference type="GO" id="GO:0003677">
    <property type="term" value="F:DNA binding"/>
    <property type="evidence" value="ECO:0007669"/>
    <property type="project" value="InterPro"/>
</dbReference>
<dbReference type="GO" id="GO:0006284">
    <property type="term" value="P:base-excision repair"/>
    <property type="evidence" value="ECO:0007669"/>
    <property type="project" value="InterPro"/>
</dbReference>
<dbReference type="CDD" id="cd00540">
    <property type="entry name" value="AAG"/>
    <property type="match status" value="1"/>
</dbReference>
<dbReference type="Gene3D" id="3.10.300.10">
    <property type="entry name" value="Methylpurine-DNA glycosylase (MPG)"/>
    <property type="match status" value="1"/>
</dbReference>
<dbReference type="HAMAP" id="MF_00527">
    <property type="entry name" value="3MGH"/>
    <property type="match status" value="1"/>
</dbReference>
<dbReference type="InterPro" id="IPR011034">
    <property type="entry name" value="Formyl_transferase-like_C_sf"/>
</dbReference>
<dbReference type="InterPro" id="IPR003180">
    <property type="entry name" value="MPG"/>
</dbReference>
<dbReference type="InterPro" id="IPR036995">
    <property type="entry name" value="MPG_sf"/>
</dbReference>
<dbReference type="NCBIfam" id="TIGR00567">
    <property type="entry name" value="3mg"/>
    <property type="match status" value="1"/>
</dbReference>
<dbReference type="PANTHER" id="PTHR10429">
    <property type="entry name" value="DNA-3-METHYLADENINE GLYCOSYLASE"/>
    <property type="match status" value="1"/>
</dbReference>
<dbReference type="PANTHER" id="PTHR10429:SF0">
    <property type="entry name" value="DNA-3-METHYLADENINE GLYCOSYLASE"/>
    <property type="match status" value="1"/>
</dbReference>
<dbReference type="Pfam" id="PF02245">
    <property type="entry name" value="Pur_DNA_glyco"/>
    <property type="match status" value="1"/>
</dbReference>
<dbReference type="SUPFAM" id="SSF50486">
    <property type="entry name" value="FMT C-terminal domain-like"/>
    <property type="match status" value="1"/>
</dbReference>
<proteinExistence type="inferred from homology"/>
<feature type="chain" id="PRO_1000127753" description="Putative 3-methyladenine DNA glycosylase">
    <location>
        <begin position="1"/>
        <end position="213"/>
    </location>
</feature>